<accession>Q923V8</accession>
<sequence>MAAGQGGWLRPALGLRLLLATAFQAVSALGAEFSSEACRELGFSSNLLCSSCDLLGQFNLLPLDPVCRGCCQEEAQFETKKLYAGAILEVCGUKLGRFPQVQAFVRSDKPKLFRGLQIKYVRGSDPVLKLLDDNGNIAEELSILKWNTDSVEEFLSEKLERI</sequence>
<proteinExistence type="evidence at protein level"/>
<name>SEP15_RAT</name>
<organism>
    <name type="scientific">Rattus norvegicus</name>
    <name type="common">Rat</name>
    <dbReference type="NCBI Taxonomy" id="10116"/>
    <lineage>
        <taxon>Eukaryota</taxon>
        <taxon>Metazoa</taxon>
        <taxon>Chordata</taxon>
        <taxon>Craniata</taxon>
        <taxon>Vertebrata</taxon>
        <taxon>Euteleostomi</taxon>
        <taxon>Mammalia</taxon>
        <taxon>Eutheria</taxon>
        <taxon>Euarchontoglires</taxon>
        <taxon>Glires</taxon>
        <taxon>Rodentia</taxon>
        <taxon>Myomorpha</taxon>
        <taxon>Muroidea</taxon>
        <taxon>Muridae</taxon>
        <taxon>Murinae</taxon>
        <taxon>Rattus</taxon>
    </lineage>
</organism>
<comment type="function">
    <text evidence="1 3 4">May be involved in redox reactions associated with the formation of disulfide bonds (PubMed:15659830). May contribute to the quality control of protein folding in the endoplasmic reticulum (PubMed:11278576). May regulate protein folding by enhancing the catalytic activity of UGGT1/UGCGL1 and UGGT2/UGCGL2 (By similarity).</text>
</comment>
<comment type="subunit">
    <text evidence="1 3">Forms a tight complex with UGGT1/UGCGL1 (PubMed:11278576). Interacts with UGGT2/UGCGL2 (By similarity). Interacts with RDH11 (By similarity).</text>
</comment>
<comment type="subcellular location">
    <subcellularLocation>
        <location evidence="3">Endoplasmic reticulum lumen</location>
    </subcellularLocation>
    <text>The association with UGGT1/UGCGL1 is essential for its retention in the endoplasmic reticulum.</text>
</comment>
<comment type="tissue specificity">
    <text evidence="4">Highest levels in prostate, lower levels in brain, lung, thyroid gland, and large intestine.</text>
</comment>
<comment type="similarity">
    <text evidence="6">Belongs to the selenoprotein M/F family.</text>
</comment>
<evidence type="ECO:0000250" key="1">
    <source>
        <dbReference type="UniProtKB" id="O60613"/>
    </source>
</evidence>
<evidence type="ECO:0000255" key="2"/>
<evidence type="ECO:0000269" key="3">
    <source>
    </source>
</evidence>
<evidence type="ECO:0000269" key="4">
    <source>
    </source>
</evidence>
<evidence type="ECO:0000303" key="5">
    <source>
    </source>
</evidence>
<evidence type="ECO:0000305" key="6"/>
<evidence type="ECO:0000312" key="7">
    <source>
        <dbReference type="RGD" id="621291"/>
    </source>
</evidence>
<feature type="signal peptide" evidence="2">
    <location>
        <begin position="1"/>
        <end position="28"/>
    </location>
</feature>
<feature type="chain" id="PRO_0000022310" description="Selenoprotein F">
    <location>
        <begin position="29"/>
        <end position="162"/>
    </location>
</feature>
<feature type="non-standard amino acid" description="Selenocysteine">
    <location>
        <position position="93"/>
    </location>
</feature>
<gene>
    <name evidence="1" type="primary">Selenof</name>
    <name evidence="7" type="synonym">Sep15</name>
</gene>
<dbReference type="EMBL" id="AF390544">
    <property type="protein sequence ID" value="AAK73100.1"/>
    <property type="molecule type" value="mRNA"/>
</dbReference>
<dbReference type="EMBL" id="BC060547">
    <property type="protein sequence ID" value="AAH60547.1"/>
    <property type="molecule type" value="mRNA"/>
</dbReference>
<dbReference type="RefSeq" id="NP_579831.2">
    <property type="nucleotide sequence ID" value="NM_133297.2"/>
</dbReference>
<dbReference type="CORUM" id="Q923V8"/>
<dbReference type="FunCoup" id="Q923V8">
    <property type="interactions" value="2552"/>
</dbReference>
<dbReference type="IntAct" id="Q923V8">
    <property type="interactions" value="1"/>
</dbReference>
<dbReference type="STRING" id="10116.ENSRNOP00000075579"/>
<dbReference type="PhosphoSitePlus" id="Q923V8"/>
<dbReference type="SwissPalm" id="Q923V8"/>
<dbReference type="Ensembl" id="ENSRNOT00000083750.2">
    <property type="protein sequence ID" value="ENSRNOP00000075579.2"/>
    <property type="gene ID" value="ENSRNOG00000055257.2"/>
</dbReference>
<dbReference type="GeneID" id="113922"/>
<dbReference type="KEGG" id="rno:113922"/>
<dbReference type="AGR" id="RGD:621291"/>
<dbReference type="CTD" id="9403"/>
<dbReference type="RGD" id="621291">
    <property type="gene designation" value="Selenof"/>
</dbReference>
<dbReference type="GeneTree" id="ENSGT00940000154284"/>
<dbReference type="InParanoid" id="Q923V8"/>
<dbReference type="OMA" id="IKPHCKQ"/>
<dbReference type="OrthoDB" id="1910009at2759"/>
<dbReference type="PhylomeDB" id="Q923V8"/>
<dbReference type="TreeFam" id="TF315117"/>
<dbReference type="PRO" id="PR:Q923V8"/>
<dbReference type="Proteomes" id="UP000002494">
    <property type="component" value="Chromosome 2"/>
</dbReference>
<dbReference type="GO" id="GO:0005788">
    <property type="term" value="C:endoplasmic reticulum lumen"/>
    <property type="evidence" value="ECO:0000250"/>
    <property type="project" value="UniProtKB"/>
</dbReference>
<dbReference type="GO" id="GO:0016491">
    <property type="term" value="F:oxidoreductase activity"/>
    <property type="evidence" value="ECO:0000318"/>
    <property type="project" value="GO_Central"/>
</dbReference>
<dbReference type="GO" id="GO:0008430">
    <property type="term" value="F:selenium binding"/>
    <property type="evidence" value="ECO:0000314"/>
    <property type="project" value="UniProtKB"/>
</dbReference>
<dbReference type="GO" id="GO:0008379">
    <property type="term" value="F:thioredoxin peroxidase activity"/>
    <property type="evidence" value="ECO:0000314"/>
    <property type="project" value="RGD"/>
</dbReference>
<dbReference type="GO" id="GO:0051084">
    <property type="term" value="P:'de novo' post-translational protein folding"/>
    <property type="evidence" value="ECO:0000304"/>
    <property type="project" value="UniProtKB"/>
</dbReference>
<dbReference type="GO" id="GO:0032496">
    <property type="term" value="P:response to lipopolysaccharide"/>
    <property type="evidence" value="ECO:0000266"/>
    <property type="project" value="RGD"/>
</dbReference>
<dbReference type="GO" id="GO:0035092">
    <property type="term" value="P:sperm DNA condensation"/>
    <property type="evidence" value="ECO:0000315"/>
    <property type="project" value="RGD"/>
</dbReference>
<dbReference type="FunFam" id="3.40.30.50:FF:000001">
    <property type="entry name" value="15 kDa selenoprotein"/>
    <property type="match status" value="1"/>
</dbReference>
<dbReference type="Gene3D" id="3.40.30.50">
    <property type="entry name" value="Sep15/SelM thioredoxin-like domain, active-site redox motif"/>
    <property type="match status" value="1"/>
</dbReference>
<dbReference type="InterPro" id="IPR038219">
    <property type="entry name" value="Sep15/SelM_sf"/>
</dbReference>
<dbReference type="InterPro" id="IPR039992">
    <property type="entry name" value="Sep15_SelM"/>
</dbReference>
<dbReference type="InterPro" id="IPR014912">
    <property type="entry name" value="Sep15_SelM_dom"/>
</dbReference>
<dbReference type="InterPro" id="IPR036249">
    <property type="entry name" value="Thioredoxin-like_sf"/>
</dbReference>
<dbReference type="PANTHER" id="PTHR13077">
    <property type="entry name" value="SELENOPROTEIN F"/>
    <property type="match status" value="1"/>
</dbReference>
<dbReference type="PANTHER" id="PTHR13077:SF6">
    <property type="entry name" value="SELENOPROTEIN F"/>
    <property type="match status" value="1"/>
</dbReference>
<dbReference type="Pfam" id="PF08806">
    <property type="entry name" value="Sep15_SelM"/>
    <property type="match status" value="1"/>
</dbReference>
<dbReference type="SUPFAM" id="SSF52833">
    <property type="entry name" value="Thioredoxin-like"/>
    <property type="match status" value="1"/>
</dbReference>
<protein>
    <recommendedName>
        <fullName evidence="1">Selenoprotein F</fullName>
    </recommendedName>
    <alternativeName>
        <fullName evidence="5">15 kDa selenoprotein</fullName>
    </alternativeName>
</protein>
<keyword id="KW-0256">Endoplasmic reticulum</keyword>
<keyword id="KW-1185">Reference proteome</keyword>
<keyword id="KW-0712">Selenocysteine</keyword>
<keyword id="KW-0732">Signal</keyword>
<reference key="1">
    <citation type="submission" date="2001-06" db="EMBL/GenBank/DDBJ databases">
        <title>A 15 kDa-selenoprotein in several tissues of the rat.</title>
        <authorList>
            <person name="Roethlein D."/>
            <person name="Kyriakopoulos A."/>
            <person name="Behne D."/>
        </authorList>
    </citation>
    <scope>NUCLEOTIDE SEQUENCE [MRNA]</scope>
</reference>
<reference key="2">
    <citation type="journal article" date="2004" name="Genome Res.">
        <title>The status, quality, and expansion of the NIH full-length cDNA project: the Mammalian Gene Collection (MGC).</title>
        <authorList>
            <consortium name="The MGC Project Team"/>
        </authorList>
    </citation>
    <scope>NUCLEOTIDE SEQUENCE [LARGE SCALE MRNA]</scope>
    <source>
        <tissue>Pituitary</tissue>
    </source>
</reference>
<reference key="3">
    <citation type="journal article" date="2001" name="J. Biol. Chem.">
        <title>Association between the 15-kDa selenoprotein and UDP-glucose:glycoprotein glucosyltransferase in the endoplasmic reticulum of mammalian cells.</title>
        <authorList>
            <person name="Korotkov K.V."/>
            <person name="Kumaraswamy E."/>
            <person name="Zhou Y."/>
            <person name="Hatfield D.L."/>
            <person name="Gladyshev V.N."/>
        </authorList>
    </citation>
    <scope>FUNCTION</scope>
    <scope>INTERACTION WITH UGGT1</scope>
    <scope>SUBCELLULAR LOCATION</scope>
</reference>
<reference key="4">
    <citation type="journal article" date="2004" name="Ann. N. Y. Acad. Sci.">
        <title>Prevention against oxidative stress of eukaryotic cell membranes by selenium compounds of the rat.</title>
        <authorList>
            <person name="Kyriakopoulos A."/>
            <person name="Bukalis K."/>
            <person name="Roethlein D."/>
            <person name="Hoppe B."/>
            <person name="Graebert A."/>
            <person name="Behne D."/>
        </authorList>
    </citation>
    <scope>FUNCTION</scope>
    <scope>TISSUE SPECIFICITY</scope>
</reference>